<proteinExistence type="inferred from homology"/>
<accession>Q6D9J1</accession>
<reference key="1">
    <citation type="journal article" date="2004" name="Proc. Natl. Acad. Sci. U.S.A.">
        <title>Genome sequence of the enterobacterial phytopathogen Erwinia carotovora subsp. atroseptica and characterization of virulence factors.</title>
        <authorList>
            <person name="Bell K.S."/>
            <person name="Sebaihia M."/>
            <person name="Pritchard L."/>
            <person name="Holden M.T.G."/>
            <person name="Hyman L.J."/>
            <person name="Holeva M.C."/>
            <person name="Thomson N.R."/>
            <person name="Bentley S.D."/>
            <person name="Churcher L.J.C."/>
            <person name="Mungall K."/>
            <person name="Atkin R."/>
            <person name="Bason N."/>
            <person name="Brooks K."/>
            <person name="Chillingworth T."/>
            <person name="Clark K."/>
            <person name="Doggett J."/>
            <person name="Fraser A."/>
            <person name="Hance Z."/>
            <person name="Hauser H."/>
            <person name="Jagels K."/>
            <person name="Moule S."/>
            <person name="Norbertczak H."/>
            <person name="Ormond D."/>
            <person name="Price C."/>
            <person name="Quail M.A."/>
            <person name="Sanders M."/>
            <person name="Walker D."/>
            <person name="Whitehead S."/>
            <person name="Salmond G.P.C."/>
            <person name="Birch P.R.J."/>
            <person name="Parkhill J."/>
            <person name="Toth I.K."/>
        </authorList>
    </citation>
    <scope>NUCLEOTIDE SEQUENCE [LARGE SCALE GENOMIC DNA]</scope>
    <source>
        <strain>SCRI 1043 / ATCC BAA-672</strain>
    </source>
</reference>
<sequence>MNIRPLHDRVIVKRKEVESKSAGGIVLTGSAAGKSTRGEVLAIGHGRILENGEVKPLDVKVGDIVIFNDGYGVKAEKIDNEEVLIMSESDILAIVEA</sequence>
<protein>
    <recommendedName>
        <fullName evidence="1">Co-chaperonin GroES</fullName>
    </recommendedName>
    <alternativeName>
        <fullName evidence="1">10 kDa chaperonin</fullName>
    </alternativeName>
    <alternativeName>
        <fullName evidence="1">Chaperonin-10</fullName>
        <shortName evidence="1">Cpn10</shortName>
    </alternativeName>
</protein>
<organism>
    <name type="scientific">Pectobacterium atrosepticum (strain SCRI 1043 / ATCC BAA-672)</name>
    <name type="common">Erwinia carotovora subsp. atroseptica</name>
    <dbReference type="NCBI Taxonomy" id="218491"/>
    <lineage>
        <taxon>Bacteria</taxon>
        <taxon>Pseudomonadati</taxon>
        <taxon>Pseudomonadota</taxon>
        <taxon>Gammaproteobacteria</taxon>
        <taxon>Enterobacterales</taxon>
        <taxon>Pectobacteriaceae</taxon>
        <taxon>Pectobacterium</taxon>
    </lineage>
</organism>
<keyword id="KW-0143">Chaperone</keyword>
<keyword id="KW-0963">Cytoplasm</keyword>
<keyword id="KW-1185">Reference proteome</keyword>
<name>CH10_PECAS</name>
<dbReference type="EMBL" id="BX950851">
    <property type="protein sequence ID" value="CAG73539.1"/>
    <property type="molecule type" value="Genomic_DNA"/>
</dbReference>
<dbReference type="RefSeq" id="WP_011092242.1">
    <property type="nucleotide sequence ID" value="NC_004547.2"/>
</dbReference>
<dbReference type="SMR" id="Q6D9J1"/>
<dbReference type="STRING" id="218491.ECA0624"/>
<dbReference type="KEGG" id="eca:ECA0624"/>
<dbReference type="eggNOG" id="COG0234">
    <property type="taxonomic scope" value="Bacteria"/>
</dbReference>
<dbReference type="HOGENOM" id="CLU_132825_1_1_6"/>
<dbReference type="OrthoDB" id="9806791at2"/>
<dbReference type="Proteomes" id="UP000007966">
    <property type="component" value="Chromosome"/>
</dbReference>
<dbReference type="GO" id="GO:0005737">
    <property type="term" value="C:cytoplasm"/>
    <property type="evidence" value="ECO:0007669"/>
    <property type="project" value="UniProtKB-SubCell"/>
</dbReference>
<dbReference type="GO" id="GO:0005524">
    <property type="term" value="F:ATP binding"/>
    <property type="evidence" value="ECO:0007669"/>
    <property type="project" value="InterPro"/>
</dbReference>
<dbReference type="GO" id="GO:0046872">
    <property type="term" value="F:metal ion binding"/>
    <property type="evidence" value="ECO:0007669"/>
    <property type="project" value="TreeGrafter"/>
</dbReference>
<dbReference type="GO" id="GO:0044183">
    <property type="term" value="F:protein folding chaperone"/>
    <property type="evidence" value="ECO:0007669"/>
    <property type="project" value="InterPro"/>
</dbReference>
<dbReference type="GO" id="GO:0051087">
    <property type="term" value="F:protein-folding chaperone binding"/>
    <property type="evidence" value="ECO:0007669"/>
    <property type="project" value="TreeGrafter"/>
</dbReference>
<dbReference type="GO" id="GO:0051082">
    <property type="term" value="F:unfolded protein binding"/>
    <property type="evidence" value="ECO:0007669"/>
    <property type="project" value="TreeGrafter"/>
</dbReference>
<dbReference type="GO" id="GO:0051085">
    <property type="term" value="P:chaperone cofactor-dependent protein refolding"/>
    <property type="evidence" value="ECO:0007669"/>
    <property type="project" value="TreeGrafter"/>
</dbReference>
<dbReference type="CDD" id="cd00320">
    <property type="entry name" value="cpn10"/>
    <property type="match status" value="1"/>
</dbReference>
<dbReference type="FunFam" id="2.30.33.40:FF:000001">
    <property type="entry name" value="10 kDa chaperonin"/>
    <property type="match status" value="1"/>
</dbReference>
<dbReference type="Gene3D" id="2.30.33.40">
    <property type="entry name" value="GroES chaperonin"/>
    <property type="match status" value="1"/>
</dbReference>
<dbReference type="HAMAP" id="MF_00580">
    <property type="entry name" value="CH10"/>
    <property type="match status" value="1"/>
</dbReference>
<dbReference type="InterPro" id="IPR020818">
    <property type="entry name" value="Chaperonin_GroES"/>
</dbReference>
<dbReference type="InterPro" id="IPR037124">
    <property type="entry name" value="Chaperonin_GroES_sf"/>
</dbReference>
<dbReference type="InterPro" id="IPR018369">
    <property type="entry name" value="Chaprnonin_Cpn10_CS"/>
</dbReference>
<dbReference type="InterPro" id="IPR011032">
    <property type="entry name" value="GroES-like_sf"/>
</dbReference>
<dbReference type="NCBIfam" id="NF001526">
    <property type="entry name" value="PRK00364.1-1"/>
    <property type="match status" value="1"/>
</dbReference>
<dbReference type="NCBIfam" id="NF001527">
    <property type="entry name" value="PRK00364.1-2"/>
    <property type="match status" value="1"/>
</dbReference>
<dbReference type="NCBIfam" id="NF001531">
    <property type="entry name" value="PRK00364.2-2"/>
    <property type="match status" value="1"/>
</dbReference>
<dbReference type="PANTHER" id="PTHR10772">
    <property type="entry name" value="10 KDA HEAT SHOCK PROTEIN"/>
    <property type="match status" value="1"/>
</dbReference>
<dbReference type="PANTHER" id="PTHR10772:SF58">
    <property type="entry name" value="CO-CHAPERONIN GROES"/>
    <property type="match status" value="1"/>
</dbReference>
<dbReference type="Pfam" id="PF00166">
    <property type="entry name" value="Cpn10"/>
    <property type="match status" value="1"/>
</dbReference>
<dbReference type="PRINTS" id="PR00297">
    <property type="entry name" value="CHAPERONIN10"/>
</dbReference>
<dbReference type="SMART" id="SM00883">
    <property type="entry name" value="Cpn10"/>
    <property type="match status" value="1"/>
</dbReference>
<dbReference type="SUPFAM" id="SSF50129">
    <property type="entry name" value="GroES-like"/>
    <property type="match status" value="1"/>
</dbReference>
<dbReference type="PROSITE" id="PS00681">
    <property type="entry name" value="CHAPERONINS_CPN10"/>
    <property type="match status" value="1"/>
</dbReference>
<gene>
    <name evidence="1" type="primary">groES</name>
    <name evidence="1" type="synonym">groS</name>
    <name type="ordered locus">ECA0624</name>
</gene>
<evidence type="ECO:0000255" key="1">
    <source>
        <dbReference type="HAMAP-Rule" id="MF_00580"/>
    </source>
</evidence>
<comment type="function">
    <text evidence="1">Together with the chaperonin GroEL, plays an essential role in assisting protein folding. The GroEL-GroES system forms a nano-cage that allows encapsulation of the non-native substrate proteins and provides a physical environment optimized to promote and accelerate protein folding. GroES binds to the apical surface of the GroEL ring, thereby capping the opening of the GroEL channel.</text>
</comment>
<comment type="subunit">
    <text evidence="1">Heptamer of 7 subunits arranged in a ring. Interacts with the chaperonin GroEL.</text>
</comment>
<comment type="subcellular location">
    <subcellularLocation>
        <location evidence="1">Cytoplasm</location>
    </subcellularLocation>
</comment>
<comment type="similarity">
    <text evidence="1">Belongs to the GroES chaperonin family.</text>
</comment>
<feature type="chain" id="PRO_0000174754" description="Co-chaperonin GroES">
    <location>
        <begin position="1"/>
        <end position="97"/>
    </location>
</feature>